<evidence type="ECO:0000255" key="1">
    <source>
        <dbReference type="HAMAP-Rule" id="MF_01574"/>
    </source>
</evidence>
<name>LACG_STAAT</name>
<dbReference type="EC" id="3.2.1.85" evidence="1"/>
<dbReference type="EMBL" id="CP000730">
    <property type="protein sequence ID" value="ABX30176.1"/>
    <property type="molecule type" value="Genomic_DNA"/>
</dbReference>
<dbReference type="RefSeq" id="WP_000169220.1">
    <property type="nucleotide sequence ID" value="NC_010079.1"/>
</dbReference>
<dbReference type="SMR" id="A8YYF6"/>
<dbReference type="CAZy" id="GH1">
    <property type="family name" value="Glycoside Hydrolase Family 1"/>
</dbReference>
<dbReference type="KEGG" id="sax:USA300HOU_2182"/>
<dbReference type="HOGENOM" id="CLU_001859_1_3_9"/>
<dbReference type="UniPathway" id="UPA00542">
    <property type="reaction ID" value="UER00605"/>
</dbReference>
<dbReference type="GO" id="GO:0005829">
    <property type="term" value="C:cytosol"/>
    <property type="evidence" value="ECO:0007669"/>
    <property type="project" value="TreeGrafter"/>
</dbReference>
<dbReference type="GO" id="GO:0033920">
    <property type="term" value="F:6-phospho-beta-galactosidase activity"/>
    <property type="evidence" value="ECO:0007669"/>
    <property type="project" value="UniProtKB-UniRule"/>
</dbReference>
<dbReference type="GO" id="GO:0008422">
    <property type="term" value="F:beta-glucosidase activity"/>
    <property type="evidence" value="ECO:0007669"/>
    <property type="project" value="TreeGrafter"/>
</dbReference>
<dbReference type="GO" id="GO:0019512">
    <property type="term" value="P:lactose catabolic process via tagatose-6-phosphate"/>
    <property type="evidence" value="ECO:0007669"/>
    <property type="project" value="InterPro"/>
</dbReference>
<dbReference type="FunFam" id="3.20.20.80:FF:000004">
    <property type="entry name" value="Beta-glucosidase 6-phospho-beta-glucosidase"/>
    <property type="match status" value="1"/>
</dbReference>
<dbReference type="Gene3D" id="3.20.20.80">
    <property type="entry name" value="Glycosidases"/>
    <property type="match status" value="1"/>
</dbReference>
<dbReference type="HAMAP" id="MF_01574">
    <property type="entry name" value="LacG"/>
    <property type="match status" value="1"/>
</dbReference>
<dbReference type="InterPro" id="IPR005928">
    <property type="entry name" value="6P-beta-galactosidase"/>
</dbReference>
<dbReference type="InterPro" id="IPR001360">
    <property type="entry name" value="Glyco_hydro_1"/>
</dbReference>
<dbReference type="InterPro" id="IPR018120">
    <property type="entry name" value="Glyco_hydro_1_AS"/>
</dbReference>
<dbReference type="InterPro" id="IPR033132">
    <property type="entry name" value="Glyco_hydro_1_N_CS"/>
</dbReference>
<dbReference type="InterPro" id="IPR017853">
    <property type="entry name" value="Glycoside_hydrolase_SF"/>
</dbReference>
<dbReference type="NCBIfam" id="TIGR01233">
    <property type="entry name" value="lacG"/>
    <property type="match status" value="1"/>
</dbReference>
<dbReference type="NCBIfam" id="NF010036">
    <property type="entry name" value="PRK13511.1"/>
    <property type="match status" value="1"/>
</dbReference>
<dbReference type="PANTHER" id="PTHR10353">
    <property type="entry name" value="GLYCOSYL HYDROLASE"/>
    <property type="match status" value="1"/>
</dbReference>
<dbReference type="PANTHER" id="PTHR10353:SF36">
    <property type="entry name" value="LP05116P"/>
    <property type="match status" value="1"/>
</dbReference>
<dbReference type="Pfam" id="PF00232">
    <property type="entry name" value="Glyco_hydro_1"/>
    <property type="match status" value="1"/>
</dbReference>
<dbReference type="PRINTS" id="PR00131">
    <property type="entry name" value="GLHYDRLASE1"/>
</dbReference>
<dbReference type="SUPFAM" id="SSF51445">
    <property type="entry name" value="(Trans)glycosidases"/>
    <property type="match status" value="1"/>
</dbReference>
<dbReference type="PROSITE" id="PS00572">
    <property type="entry name" value="GLYCOSYL_HYDROL_F1_1"/>
    <property type="match status" value="1"/>
</dbReference>
<dbReference type="PROSITE" id="PS00653">
    <property type="entry name" value="GLYCOSYL_HYDROL_F1_2"/>
    <property type="match status" value="1"/>
</dbReference>
<comment type="catalytic activity">
    <reaction evidence="1">
        <text>a 6-phospho-beta-D-galactoside + H2O = D-galactose 6-phosphate + an alcohol</text>
        <dbReference type="Rhea" id="RHEA:24568"/>
        <dbReference type="ChEBI" id="CHEBI:15377"/>
        <dbReference type="ChEBI" id="CHEBI:30879"/>
        <dbReference type="ChEBI" id="CHEBI:58534"/>
        <dbReference type="ChEBI" id="CHEBI:91004"/>
        <dbReference type="EC" id="3.2.1.85"/>
    </reaction>
</comment>
<comment type="pathway">
    <text evidence="1">Carbohydrate metabolism; lactose degradation; D-galactose 6-phosphate and beta-D-glucose from lactose 6-phosphate: step 1/1.</text>
</comment>
<comment type="similarity">
    <text evidence="1">Belongs to the glycosyl hydrolase 1 family.</text>
</comment>
<feature type="chain" id="PRO_1000087881" description="6-phospho-beta-galactosidase">
    <location>
        <begin position="1"/>
        <end position="470"/>
    </location>
</feature>
<feature type="active site" description="Proton donor" evidence="1">
    <location>
        <position position="160"/>
    </location>
</feature>
<feature type="active site" description="Nucleophile" evidence="1">
    <location>
        <position position="375"/>
    </location>
</feature>
<feature type="binding site" evidence="1">
    <location>
        <position position="19"/>
    </location>
    <ligand>
        <name>D-galactose 6-phosphate</name>
        <dbReference type="ChEBI" id="CHEBI:91004"/>
    </ligand>
</feature>
<feature type="binding site" evidence="1">
    <location>
        <position position="116"/>
    </location>
    <ligand>
        <name>D-galactose 6-phosphate</name>
        <dbReference type="ChEBI" id="CHEBI:91004"/>
    </ligand>
</feature>
<feature type="binding site" evidence="1">
    <location>
        <position position="159"/>
    </location>
    <ligand>
        <name>D-galactose 6-phosphate</name>
        <dbReference type="ChEBI" id="CHEBI:91004"/>
    </ligand>
</feature>
<feature type="binding site" evidence="1">
    <location>
        <position position="160"/>
    </location>
    <ligand>
        <name>D-galactose 6-phosphate</name>
        <dbReference type="ChEBI" id="CHEBI:91004"/>
    </ligand>
</feature>
<feature type="binding site" evidence="1">
    <location>
        <position position="297"/>
    </location>
    <ligand>
        <name>D-galactose 6-phosphate</name>
        <dbReference type="ChEBI" id="CHEBI:91004"/>
    </ligand>
</feature>
<feature type="binding site" evidence="1">
    <location>
        <position position="430"/>
    </location>
    <ligand>
        <name>D-galactose 6-phosphate</name>
        <dbReference type="ChEBI" id="CHEBI:91004"/>
    </ligand>
</feature>
<feature type="binding site" evidence="1">
    <location>
        <position position="431"/>
    </location>
    <ligand>
        <name>D-galactose 6-phosphate</name>
        <dbReference type="ChEBI" id="CHEBI:91004"/>
    </ligand>
</feature>
<feature type="binding site" evidence="1">
    <location>
        <position position="437"/>
    </location>
    <ligand>
        <name>D-galactose 6-phosphate</name>
        <dbReference type="ChEBI" id="CHEBI:91004"/>
    </ligand>
</feature>
<feature type="binding site" evidence="1">
    <location>
        <position position="439"/>
    </location>
    <ligand>
        <name>D-galactose 6-phosphate</name>
        <dbReference type="ChEBI" id="CHEBI:91004"/>
    </ligand>
</feature>
<sequence length="470" mass="54550">MTKTLPEDFIFGGATAAYQAEGATNTDGKGRVAWDTYLEENYWYTAEPASDFYNRYPVDLELSEKFGVNGIRISIAWSRIFPNGYGEVNPKGVEYYHKLFAECHKRHVEPFVTLHHFDTPEVLHKDGDFLNRKTIDYFVDYAEYCFKEFPEVKYWTTFNEIGPIGDGQYLVGKFPPGIKYDFEKVFQSHHNMMVAHARAVKLFKDGGYKGEIGVVHALPTKYPFDPSNPEDVRAAELEDIIHNKFILDATYLGKYSRETMEGVQHILSVNGGKLNITDEDYAILDAAKDLNDFLGINYYMSDWMRGYDGESEITHNATGDKGGSKYQLKGVGQREFDVDVPRTDWDWMIYPQGLYDQIMRVVKDYPNYHKIYITENGLGYKDEFIESEKTVHDDARIDYVRQHLNVIADAIIDGANVKGYFIWSLMDVFSWSNGYEKRYGLFYVDFETQERYPKKSAYWYKELAETKEIK</sequence>
<keyword id="KW-0326">Glycosidase</keyword>
<keyword id="KW-0378">Hydrolase</keyword>
<proteinExistence type="inferred from homology"/>
<gene>
    <name evidence="1" type="primary">lacG</name>
    <name type="ordered locus">USA300HOU_2182</name>
</gene>
<organism>
    <name type="scientific">Staphylococcus aureus (strain USA300 / TCH1516)</name>
    <dbReference type="NCBI Taxonomy" id="451516"/>
    <lineage>
        <taxon>Bacteria</taxon>
        <taxon>Bacillati</taxon>
        <taxon>Bacillota</taxon>
        <taxon>Bacilli</taxon>
        <taxon>Bacillales</taxon>
        <taxon>Staphylococcaceae</taxon>
        <taxon>Staphylococcus</taxon>
    </lineage>
</organism>
<protein>
    <recommendedName>
        <fullName evidence="1">6-phospho-beta-galactosidase</fullName>
        <ecNumber evidence="1">3.2.1.85</ecNumber>
    </recommendedName>
    <alternativeName>
        <fullName evidence="1">Beta-D-phosphogalactoside galactohydrolase</fullName>
        <shortName evidence="1">PGALase</shortName>
    </alternativeName>
    <alternativeName>
        <fullName evidence="1">P-beta-Gal</fullName>
        <shortName evidence="1">PBG</shortName>
    </alternativeName>
</protein>
<accession>A8YYF6</accession>
<reference key="1">
    <citation type="journal article" date="2007" name="BMC Microbiol.">
        <title>Subtle genetic changes enhance virulence of methicillin resistant and sensitive Staphylococcus aureus.</title>
        <authorList>
            <person name="Highlander S.K."/>
            <person name="Hulten K.G."/>
            <person name="Qin X."/>
            <person name="Jiang H."/>
            <person name="Yerrapragada S."/>
            <person name="Mason E.O. Jr."/>
            <person name="Shang Y."/>
            <person name="Williams T.M."/>
            <person name="Fortunov R.M."/>
            <person name="Liu Y."/>
            <person name="Igboeli O."/>
            <person name="Petrosino J."/>
            <person name="Tirumalai M."/>
            <person name="Uzman A."/>
            <person name="Fox G.E."/>
            <person name="Cardenas A.M."/>
            <person name="Muzny D.M."/>
            <person name="Hemphill L."/>
            <person name="Ding Y."/>
            <person name="Dugan S."/>
            <person name="Blyth P.R."/>
            <person name="Buhay C.J."/>
            <person name="Dinh H.H."/>
            <person name="Hawes A.C."/>
            <person name="Holder M."/>
            <person name="Kovar C.L."/>
            <person name="Lee S.L."/>
            <person name="Liu W."/>
            <person name="Nazareth L.V."/>
            <person name="Wang Q."/>
            <person name="Zhou J."/>
            <person name="Kaplan S.L."/>
            <person name="Weinstock G.M."/>
        </authorList>
    </citation>
    <scope>NUCLEOTIDE SEQUENCE [LARGE SCALE GENOMIC DNA]</scope>
    <source>
        <strain>USA300 / TCH1516</strain>
    </source>
</reference>